<accession>A4IKW6</accession>
<protein>
    <recommendedName>
        <fullName evidence="1">ATP-dependent helicase/deoxyribonuclease subunit B</fullName>
        <ecNumber evidence="1">3.1.-.-</ecNumber>
    </recommendedName>
    <alternativeName>
        <fullName evidence="1">ATP-dependent helicase/nuclease subunit AddB</fullName>
    </alternativeName>
</protein>
<dbReference type="EC" id="3.1.-.-" evidence="1"/>
<dbReference type="EMBL" id="CP000557">
    <property type="protein sequence ID" value="ABO65970.1"/>
    <property type="status" value="ALT_INIT"/>
    <property type="molecule type" value="Genomic_DNA"/>
</dbReference>
<dbReference type="RefSeq" id="WP_301336406.1">
    <property type="nucleotide sequence ID" value="NC_009328.1"/>
</dbReference>
<dbReference type="SMR" id="A4IKW6"/>
<dbReference type="GeneID" id="87621781"/>
<dbReference type="KEGG" id="gtn:GTNG_0588"/>
<dbReference type="eggNOG" id="COG3857">
    <property type="taxonomic scope" value="Bacteria"/>
</dbReference>
<dbReference type="HOGENOM" id="CLU_007838_0_0_9"/>
<dbReference type="Proteomes" id="UP000001578">
    <property type="component" value="Chromosome"/>
</dbReference>
<dbReference type="GO" id="GO:0051539">
    <property type="term" value="F:4 iron, 4 sulfur cluster binding"/>
    <property type="evidence" value="ECO:0007669"/>
    <property type="project" value="UniProtKB-KW"/>
</dbReference>
<dbReference type="GO" id="GO:0008409">
    <property type="term" value="F:5'-3' exonuclease activity"/>
    <property type="evidence" value="ECO:0007669"/>
    <property type="project" value="UniProtKB-UniRule"/>
</dbReference>
<dbReference type="GO" id="GO:0005524">
    <property type="term" value="F:ATP binding"/>
    <property type="evidence" value="ECO:0007669"/>
    <property type="project" value="UniProtKB-UniRule"/>
</dbReference>
<dbReference type="GO" id="GO:0003690">
    <property type="term" value="F:double-stranded DNA binding"/>
    <property type="evidence" value="ECO:0007669"/>
    <property type="project" value="UniProtKB-UniRule"/>
</dbReference>
<dbReference type="GO" id="GO:0004386">
    <property type="term" value="F:helicase activity"/>
    <property type="evidence" value="ECO:0007669"/>
    <property type="project" value="UniProtKB-KW"/>
</dbReference>
<dbReference type="GO" id="GO:0046872">
    <property type="term" value="F:metal ion binding"/>
    <property type="evidence" value="ECO:0007669"/>
    <property type="project" value="UniProtKB-KW"/>
</dbReference>
<dbReference type="GO" id="GO:0000724">
    <property type="term" value="P:double-strand break repair via homologous recombination"/>
    <property type="evidence" value="ECO:0007669"/>
    <property type="project" value="UniProtKB-UniRule"/>
</dbReference>
<dbReference type="Gene3D" id="6.10.140.1030">
    <property type="match status" value="1"/>
</dbReference>
<dbReference type="Gene3D" id="3.40.50.300">
    <property type="entry name" value="P-loop containing nucleotide triphosphate hydrolases"/>
    <property type="match status" value="3"/>
</dbReference>
<dbReference type="HAMAP" id="MF_01452">
    <property type="entry name" value="AddB_type1"/>
    <property type="match status" value="1"/>
</dbReference>
<dbReference type="InterPro" id="IPR049035">
    <property type="entry name" value="ADDB_N"/>
</dbReference>
<dbReference type="InterPro" id="IPR014140">
    <property type="entry name" value="DNA_helicase_suAddB"/>
</dbReference>
<dbReference type="InterPro" id="IPR014017">
    <property type="entry name" value="DNA_helicase_UvrD-like_C"/>
</dbReference>
<dbReference type="InterPro" id="IPR027417">
    <property type="entry name" value="P-loop_NTPase"/>
</dbReference>
<dbReference type="InterPro" id="IPR038726">
    <property type="entry name" value="PDDEXK_AddAB-type"/>
</dbReference>
<dbReference type="NCBIfam" id="TIGR02773">
    <property type="entry name" value="addB_Gpos"/>
    <property type="match status" value="1"/>
</dbReference>
<dbReference type="PANTHER" id="PTHR30591">
    <property type="entry name" value="RECBCD ENZYME SUBUNIT RECC"/>
    <property type="match status" value="1"/>
</dbReference>
<dbReference type="PANTHER" id="PTHR30591:SF1">
    <property type="entry name" value="RECBCD ENZYME SUBUNIT RECC"/>
    <property type="match status" value="1"/>
</dbReference>
<dbReference type="Pfam" id="PF21445">
    <property type="entry name" value="ADDB_N"/>
    <property type="match status" value="1"/>
</dbReference>
<dbReference type="Pfam" id="PF12705">
    <property type="entry name" value="PDDEXK_1"/>
    <property type="match status" value="1"/>
</dbReference>
<dbReference type="SUPFAM" id="SSF52540">
    <property type="entry name" value="P-loop containing nucleoside triphosphate hydrolases"/>
    <property type="match status" value="2"/>
</dbReference>
<dbReference type="PROSITE" id="PS51198">
    <property type="entry name" value="UVRD_HELICASE_ATP_BIND"/>
    <property type="match status" value="1"/>
</dbReference>
<dbReference type="PROSITE" id="PS51217">
    <property type="entry name" value="UVRD_HELICASE_CTER"/>
    <property type="match status" value="1"/>
</dbReference>
<gene>
    <name evidence="1" type="primary">addB</name>
    <name type="ordered locus">GTNG_0588</name>
</gene>
<evidence type="ECO:0000255" key="1">
    <source>
        <dbReference type="HAMAP-Rule" id="MF_01452"/>
    </source>
</evidence>
<evidence type="ECO:0000305" key="2"/>
<reference key="1">
    <citation type="journal article" date="2007" name="Proc. Natl. Acad. Sci. U.S.A.">
        <title>Genome and proteome of long-chain alkane degrading Geobacillus thermodenitrificans NG80-2 isolated from a deep-subsurface oil reservoir.</title>
        <authorList>
            <person name="Feng L."/>
            <person name="Wang W."/>
            <person name="Cheng J."/>
            <person name="Ren Y."/>
            <person name="Zhao G."/>
            <person name="Gao C."/>
            <person name="Tang Y."/>
            <person name="Liu X."/>
            <person name="Han W."/>
            <person name="Peng X."/>
            <person name="Liu R."/>
            <person name="Wang L."/>
        </authorList>
    </citation>
    <scope>NUCLEOTIDE SEQUENCE [LARGE SCALE GENOMIC DNA]</scope>
    <source>
        <strain>NG80-2</strain>
    </source>
</reference>
<keyword id="KW-0004">4Fe-4S</keyword>
<keyword id="KW-0067">ATP-binding</keyword>
<keyword id="KW-0227">DNA damage</keyword>
<keyword id="KW-0234">DNA repair</keyword>
<keyword id="KW-0238">DNA-binding</keyword>
<keyword id="KW-0269">Exonuclease</keyword>
<keyword id="KW-0347">Helicase</keyword>
<keyword id="KW-0378">Hydrolase</keyword>
<keyword id="KW-0408">Iron</keyword>
<keyword id="KW-0411">Iron-sulfur</keyword>
<keyword id="KW-0479">Metal-binding</keyword>
<keyword id="KW-0540">Nuclease</keyword>
<keyword id="KW-0547">Nucleotide-binding</keyword>
<proteinExistence type="inferred from homology"/>
<comment type="function">
    <text evidence="1">The heterodimer acts as both an ATP-dependent DNA helicase and an ATP-dependent, dual-direction single-stranded exonuclease. Recognizes the chi site generating a DNA molecule suitable for the initiation of homologous recombination. The AddB subunit has 5' -&gt; 3' nuclease activity but not helicase activity.</text>
</comment>
<comment type="cofactor">
    <cofactor evidence="1">
        <name>Mg(2+)</name>
        <dbReference type="ChEBI" id="CHEBI:18420"/>
    </cofactor>
</comment>
<comment type="cofactor">
    <cofactor evidence="1">
        <name>[4Fe-4S] cluster</name>
        <dbReference type="ChEBI" id="CHEBI:49883"/>
    </cofactor>
    <text evidence="1">Binds 1 [4Fe-4S] cluster.</text>
</comment>
<comment type="subunit">
    <text evidence="1">Heterodimer of AddA and AddB.</text>
</comment>
<comment type="miscellaneous">
    <text evidence="1">Despite having conserved helicase domains, this subunit does not have helicase activity.</text>
</comment>
<comment type="similarity">
    <text evidence="1">Belongs to the helicase family. AddB/RexB type 1 subfamily.</text>
</comment>
<comment type="sequence caution" evidence="2">
    <conflict type="erroneous initiation">
        <sequence resource="EMBL-CDS" id="ABO65970"/>
    </conflict>
    <text>Extended N-terminus.</text>
</comment>
<sequence length="1167" mass="133929">MSLRFLLGRSGSGKTTACLEEIRRQLQEDPKGRTIVYLVPEQMTFQCEYALIHTEGTEGMIRAQVFSFPRLAWRVLQETGGMNRYHVHDVGVQMMIRKIIEQRKQELKLFGRAADKSGFVEQLHEMIAECKRYCLTPDELRRHAGVLESGSGQPGRRLLADKLSDVALVYEELERSLLGHYLDSEDYLRLLVEHIPRSSYLHGADIYIDGFHHFSPQEYMVIEQLLHRCRRVTVCLTADRPYDVGMPDELDLFYLPAQTYRQLRELALANDIMIESPVVLSVNRRHQDKALAHLEEQFHRRPLLPYEAETDAICLYEAANRRAEIEAVAREIIRLVRDEGARYRDIALIIRQTEAYRDLVKTVFFDFDIPYFMDEKEPMHYHPLIELVRAALETVVTRWRYEAVFRAVKTDLLFPVDGDLAMWREAADKLENYVLAHGVKGEKWTSDERWTYRRYQALDGLNVPQTDEERQFEDKLNEWREALAAPLRRLERRLRRAADGRGLCTALYLFLEELQIPKKLEQMSAQAEADGRLVEARQHEQAWNAVVDLLDQYVEMLGAEPLPLAEFAKIIEAGLDRLEFALVPPAIDQVIVAQLDRSRLIDVKYAFIIGVNDGVIPAKVKDEGLVAEVEREQLRELGVALAPGGREQLFYDPFFVYLALACPSRRLYVTYPLADGEGKALMPSPLIKQLVQLFPRVSVHLCGNDPFDAPEEKPETFVTVPRATQTYLISQLRAWKRNYGIDPLWWDVYNVLISHPEWRARVEQAVSGLFYTNQAVLKREWSRRLYGKKIQASVSRMEQFQKCPYAHFASHGLRLKERNVFRLEAPDVGQLFHAAIKQIADRVREQHLDWKQLSRSECERLSAEAVERIAPLIQQQVLSSSNRYEYMKRKLKNVVARTTHVLSEHARASGFAPVGFELSFGPGGDLPPLRFQLRDGTVMELVGRIDRVDKAESSQGVLLRIIDYKSSAKTLDLTEVYYGLALQMFTYLDIVLTYAEQLVGEPALPAGVLYFHIHNPIIQAKQWLDNEMEVARKLLEPFRMRGLLLADAETIRLMDSQTENGQWSLIVPAQLTRTGAIHSRSSVASASDFAALRQHVRRLFVDIGGQIADGVVSIAPYKLKNKTACEFCAFKPVCQFDEALSGNGYRKLTPQTKDAVIETLGKREEES</sequence>
<feature type="chain" id="PRO_0000379192" description="ATP-dependent helicase/deoxyribonuclease subunit B">
    <location>
        <begin position="1"/>
        <end position="1167"/>
    </location>
</feature>
<feature type="domain" description="UvrD-like helicase ATP-binding" evidence="1">
    <location>
        <begin position="1"/>
        <end position="359"/>
    </location>
</feature>
<feature type="domain" description="UvrD-like helicase C-terminal" evidence="1">
    <location>
        <begin position="282"/>
        <end position="588"/>
    </location>
</feature>
<feature type="binding site" evidence="1">
    <location>
        <begin position="8"/>
        <end position="15"/>
    </location>
    <ligand>
        <name>ATP</name>
        <dbReference type="ChEBI" id="CHEBI:30616"/>
    </ligand>
</feature>
<feature type="binding site" evidence="1">
    <location>
        <position position="803"/>
    </location>
    <ligand>
        <name>[4Fe-4S] cluster</name>
        <dbReference type="ChEBI" id="CHEBI:49883"/>
    </ligand>
</feature>
<feature type="binding site" evidence="1">
    <location>
        <position position="1125"/>
    </location>
    <ligand>
        <name>[4Fe-4S] cluster</name>
        <dbReference type="ChEBI" id="CHEBI:49883"/>
    </ligand>
</feature>
<feature type="binding site" evidence="1">
    <location>
        <position position="1128"/>
    </location>
    <ligand>
        <name>[4Fe-4S] cluster</name>
        <dbReference type="ChEBI" id="CHEBI:49883"/>
    </ligand>
</feature>
<feature type="binding site" evidence="1">
    <location>
        <position position="1134"/>
    </location>
    <ligand>
        <name>[4Fe-4S] cluster</name>
        <dbReference type="ChEBI" id="CHEBI:49883"/>
    </ligand>
</feature>
<organism>
    <name type="scientific">Geobacillus thermodenitrificans (strain NG80-2)</name>
    <dbReference type="NCBI Taxonomy" id="420246"/>
    <lineage>
        <taxon>Bacteria</taxon>
        <taxon>Bacillati</taxon>
        <taxon>Bacillota</taxon>
        <taxon>Bacilli</taxon>
        <taxon>Bacillales</taxon>
        <taxon>Anoxybacillaceae</taxon>
        <taxon>Geobacillus</taxon>
    </lineage>
</organism>
<name>ADDB_GEOTN</name>